<reference key="1">
    <citation type="submission" date="2008-10" db="EMBL/GenBank/DDBJ databases">
        <title>Genome sequence of Clostridium botulinum A2 Kyoto.</title>
        <authorList>
            <person name="Shrivastava S."/>
            <person name="Brinkac L.M."/>
            <person name="Brown J.L."/>
            <person name="Bruce D."/>
            <person name="Detter C.C."/>
            <person name="Johnson E.A."/>
            <person name="Munk C.A."/>
            <person name="Smith L.A."/>
            <person name="Smith T.J."/>
            <person name="Sutton G."/>
            <person name="Brettin T.S."/>
        </authorList>
    </citation>
    <scope>NUCLEOTIDE SEQUENCE [LARGE SCALE GENOMIC DNA]</scope>
    <source>
        <strain>Kyoto / Type A2</strain>
    </source>
</reference>
<feature type="chain" id="PRO_1000197746" description="Putative membrane protein insertion efficiency factor">
    <location>
        <begin position="1"/>
        <end position="69"/>
    </location>
</feature>
<accession>C1FP34</accession>
<name>YIDD_CLOBJ</name>
<comment type="function">
    <text evidence="1">Could be involved in insertion of integral membrane proteins into the membrane.</text>
</comment>
<comment type="subcellular location">
    <subcellularLocation>
        <location evidence="1">Cell membrane</location>
        <topology evidence="1">Peripheral membrane protein</topology>
        <orientation evidence="1">Cytoplasmic side</orientation>
    </subcellularLocation>
</comment>
<comment type="similarity">
    <text evidence="1">Belongs to the UPF0161 family.</text>
</comment>
<sequence length="69" mass="8031">MKNLLICIIKMYRKYISPLKRPSCRFYPTCSQYSLEAIEKYGALKGTLISIKRILKCHPFNEGGYDPVK</sequence>
<keyword id="KW-1003">Cell membrane</keyword>
<keyword id="KW-0472">Membrane</keyword>
<dbReference type="EMBL" id="CP001581">
    <property type="protein sequence ID" value="ACO86584.1"/>
    <property type="molecule type" value="Genomic_DNA"/>
</dbReference>
<dbReference type="KEGG" id="cby:CLM_4151"/>
<dbReference type="eggNOG" id="COG0759">
    <property type="taxonomic scope" value="Bacteria"/>
</dbReference>
<dbReference type="HOGENOM" id="CLU_144811_6_0_9"/>
<dbReference type="Proteomes" id="UP000001374">
    <property type="component" value="Chromosome"/>
</dbReference>
<dbReference type="GO" id="GO:0005886">
    <property type="term" value="C:plasma membrane"/>
    <property type="evidence" value="ECO:0007669"/>
    <property type="project" value="UniProtKB-SubCell"/>
</dbReference>
<dbReference type="HAMAP" id="MF_00386">
    <property type="entry name" value="UPF0161_YidD"/>
    <property type="match status" value="1"/>
</dbReference>
<dbReference type="InterPro" id="IPR002696">
    <property type="entry name" value="Membr_insert_effic_factor_YidD"/>
</dbReference>
<dbReference type="NCBIfam" id="TIGR00278">
    <property type="entry name" value="membrane protein insertion efficiency factor YidD"/>
    <property type="match status" value="1"/>
</dbReference>
<dbReference type="PANTHER" id="PTHR33383">
    <property type="entry name" value="MEMBRANE PROTEIN INSERTION EFFICIENCY FACTOR-RELATED"/>
    <property type="match status" value="1"/>
</dbReference>
<dbReference type="PANTHER" id="PTHR33383:SF1">
    <property type="entry name" value="MEMBRANE PROTEIN INSERTION EFFICIENCY FACTOR-RELATED"/>
    <property type="match status" value="1"/>
</dbReference>
<dbReference type="Pfam" id="PF01809">
    <property type="entry name" value="YidD"/>
    <property type="match status" value="1"/>
</dbReference>
<dbReference type="SMART" id="SM01234">
    <property type="entry name" value="Haemolytic"/>
    <property type="match status" value="1"/>
</dbReference>
<protein>
    <recommendedName>
        <fullName evidence="1">Putative membrane protein insertion efficiency factor</fullName>
    </recommendedName>
</protein>
<organism>
    <name type="scientific">Clostridium botulinum (strain Kyoto / Type A2)</name>
    <dbReference type="NCBI Taxonomy" id="536232"/>
    <lineage>
        <taxon>Bacteria</taxon>
        <taxon>Bacillati</taxon>
        <taxon>Bacillota</taxon>
        <taxon>Clostridia</taxon>
        <taxon>Eubacteriales</taxon>
        <taxon>Clostridiaceae</taxon>
        <taxon>Clostridium</taxon>
    </lineage>
</organism>
<evidence type="ECO:0000255" key="1">
    <source>
        <dbReference type="HAMAP-Rule" id="MF_00386"/>
    </source>
</evidence>
<gene>
    <name type="ordered locus">CLM_4151</name>
</gene>
<proteinExistence type="inferred from homology"/>